<dbReference type="EMBL" id="AM286415">
    <property type="protein sequence ID" value="CAL10427.1"/>
    <property type="molecule type" value="Genomic_DNA"/>
</dbReference>
<dbReference type="RefSeq" id="WP_005175676.1">
    <property type="nucleotide sequence ID" value="NC_008800.1"/>
</dbReference>
<dbReference type="RefSeq" id="YP_001004676.1">
    <property type="nucleotide sequence ID" value="NC_008800.1"/>
</dbReference>
<dbReference type="SMR" id="A1JII9"/>
<dbReference type="KEGG" id="yen:YE0295"/>
<dbReference type="PATRIC" id="fig|393305.7.peg.387"/>
<dbReference type="eggNOG" id="COG3160">
    <property type="taxonomic scope" value="Bacteria"/>
</dbReference>
<dbReference type="HOGENOM" id="CLU_142729_0_0_6"/>
<dbReference type="OrthoDB" id="5567237at2"/>
<dbReference type="Proteomes" id="UP000000642">
    <property type="component" value="Chromosome"/>
</dbReference>
<dbReference type="GO" id="GO:0005737">
    <property type="term" value="C:cytoplasm"/>
    <property type="evidence" value="ECO:0007669"/>
    <property type="project" value="UniProtKB-SubCell"/>
</dbReference>
<dbReference type="GO" id="GO:0006355">
    <property type="term" value="P:regulation of DNA-templated transcription"/>
    <property type="evidence" value="ECO:0007669"/>
    <property type="project" value="InterPro"/>
</dbReference>
<dbReference type="Gene3D" id="1.20.120.1370">
    <property type="entry name" value="Regulator of RNA polymerase sigma(70) subunit, domain 4"/>
    <property type="match status" value="1"/>
</dbReference>
<dbReference type="HAMAP" id="MF_01181">
    <property type="entry name" value="Rsd"/>
    <property type="match status" value="1"/>
</dbReference>
<dbReference type="InterPro" id="IPR038309">
    <property type="entry name" value="Rsd/AlgQ_sf"/>
</dbReference>
<dbReference type="InterPro" id="IPR023785">
    <property type="entry name" value="Sigma70_reg_Rsd"/>
</dbReference>
<dbReference type="InterPro" id="IPR007448">
    <property type="entry name" value="Sigma70_reg_Rsd_AlgQ"/>
</dbReference>
<dbReference type="NCBIfam" id="NF008723">
    <property type="entry name" value="PRK11718.1"/>
    <property type="match status" value="1"/>
</dbReference>
<dbReference type="Pfam" id="PF04353">
    <property type="entry name" value="Rsd_AlgQ"/>
    <property type="match status" value="1"/>
</dbReference>
<dbReference type="PIRSF" id="PIRSF016548">
    <property type="entry name" value="Rsd_AlgQ"/>
    <property type="match status" value="1"/>
</dbReference>
<feature type="chain" id="PRO_1000065798" description="Regulator of sigma D">
    <location>
        <begin position="1"/>
        <end position="167"/>
    </location>
</feature>
<reference key="1">
    <citation type="journal article" date="2006" name="PLoS Genet.">
        <title>The complete genome sequence and comparative genome analysis of the high pathogenicity Yersinia enterocolitica strain 8081.</title>
        <authorList>
            <person name="Thomson N.R."/>
            <person name="Howard S."/>
            <person name="Wren B.W."/>
            <person name="Holden M.T.G."/>
            <person name="Crossman L."/>
            <person name="Challis G.L."/>
            <person name="Churcher C."/>
            <person name="Mungall K."/>
            <person name="Brooks K."/>
            <person name="Chillingworth T."/>
            <person name="Feltwell T."/>
            <person name="Abdellah Z."/>
            <person name="Hauser H."/>
            <person name="Jagels K."/>
            <person name="Maddison M."/>
            <person name="Moule S."/>
            <person name="Sanders M."/>
            <person name="Whitehead S."/>
            <person name="Quail M.A."/>
            <person name="Dougan G."/>
            <person name="Parkhill J."/>
            <person name="Prentice M.B."/>
        </authorList>
    </citation>
    <scope>NUCLEOTIDE SEQUENCE [LARGE SCALE GENOMIC DNA]</scope>
    <source>
        <strain>NCTC 13174 / 8081</strain>
    </source>
</reference>
<keyword id="KW-0963">Cytoplasm</keyword>
<keyword id="KW-0804">Transcription</keyword>
<keyword id="KW-0805">Transcription regulation</keyword>
<name>RSD_YERE8</name>
<gene>
    <name evidence="1" type="primary">rsd</name>
    <name type="ordered locus">YE0295</name>
</gene>
<protein>
    <recommendedName>
        <fullName evidence="1">Regulator of sigma D</fullName>
    </recommendedName>
</protein>
<comment type="function">
    <text evidence="1">Binds RpoD and negatively regulates RpoD-mediated transcription activation by preventing the interaction between the primary sigma factor RpoD with the catalytic core of the RNA polymerase and with promoter DNA. May be involved in replacement of the RNA polymerase sigma subunit from RpoD to RpoS during the transition from exponential growth to the stationary phase.</text>
</comment>
<comment type="subunit">
    <text evidence="1">Interacts with RpoD.</text>
</comment>
<comment type="subcellular location">
    <subcellularLocation>
        <location evidence="1">Cytoplasm</location>
    </subcellularLocation>
</comment>
<comment type="similarity">
    <text evidence="1">Belongs to the Rsd/AlgQ family.</text>
</comment>
<organism>
    <name type="scientific">Yersinia enterocolitica serotype O:8 / biotype 1B (strain NCTC 13174 / 8081)</name>
    <dbReference type="NCBI Taxonomy" id="393305"/>
    <lineage>
        <taxon>Bacteria</taxon>
        <taxon>Pseudomonadati</taxon>
        <taxon>Pseudomonadota</taxon>
        <taxon>Gammaproteobacteria</taxon>
        <taxon>Enterobacterales</taxon>
        <taxon>Yersiniaceae</taxon>
        <taxon>Yersinia</taxon>
    </lineage>
</organism>
<accession>A1JII9</accession>
<evidence type="ECO:0000255" key="1">
    <source>
        <dbReference type="HAMAP-Rule" id="MF_01181"/>
    </source>
</evidence>
<proteinExistence type="inferred from homology"/>
<sequence length="167" mass="18972">MLNRLESLTQRVGGSNELIDQWLHARKELLVSYCTVIGIKPQKGKHTPLNEKALENFCHNLVDYLSSGHFHIYDRIIKQVEGASSPKMALTTKVYPALKNNTQTIMAFHDRYTNIEIDDDSCTEFQQALSDIGEALDARFRLEDQLIQWAAESWQAAKPVIQAGQVK</sequence>